<name>RS8_RHIE6</name>
<evidence type="ECO:0000255" key="1">
    <source>
        <dbReference type="HAMAP-Rule" id="MF_01302"/>
    </source>
</evidence>
<evidence type="ECO:0000305" key="2"/>
<gene>
    <name evidence="1" type="primary">rpsH</name>
    <name type="ordered locus">RHECIAT_CH0001763</name>
</gene>
<protein>
    <recommendedName>
        <fullName evidence="1">Small ribosomal subunit protein uS8</fullName>
    </recommendedName>
    <alternativeName>
        <fullName evidence="2">30S ribosomal protein S8</fullName>
    </alternativeName>
</protein>
<dbReference type="EMBL" id="CP001074">
    <property type="protein sequence ID" value="ACE90733.1"/>
    <property type="molecule type" value="Genomic_DNA"/>
</dbReference>
<dbReference type="SMR" id="B3PWT5"/>
<dbReference type="KEGG" id="rec:RHECIAT_CH0001763"/>
<dbReference type="eggNOG" id="COG0096">
    <property type="taxonomic scope" value="Bacteria"/>
</dbReference>
<dbReference type="HOGENOM" id="CLU_098428_0_0_5"/>
<dbReference type="Proteomes" id="UP000008817">
    <property type="component" value="Chromosome"/>
</dbReference>
<dbReference type="GO" id="GO:1990904">
    <property type="term" value="C:ribonucleoprotein complex"/>
    <property type="evidence" value="ECO:0007669"/>
    <property type="project" value="UniProtKB-KW"/>
</dbReference>
<dbReference type="GO" id="GO:0005840">
    <property type="term" value="C:ribosome"/>
    <property type="evidence" value="ECO:0007669"/>
    <property type="project" value="UniProtKB-KW"/>
</dbReference>
<dbReference type="GO" id="GO:0019843">
    <property type="term" value="F:rRNA binding"/>
    <property type="evidence" value="ECO:0007669"/>
    <property type="project" value="UniProtKB-UniRule"/>
</dbReference>
<dbReference type="GO" id="GO:0003735">
    <property type="term" value="F:structural constituent of ribosome"/>
    <property type="evidence" value="ECO:0007669"/>
    <property type="project" value="InterPro"/>
</dbReference>
<dbReference type="GO" id="GO:0006412">
    <property type="term" value="P:translation"/>
    <property type="evidence" value="ECO:0007669"/>
    <property type="project" value="UniProtKB-UniRule"/>
</dbReference>
<dbReference type="FunFam" id="3.30.1370.30:FF:000002">
    <property type="entry name" value="30S ribosomal protein S8"/>
    <property type="match status" value="1"/>
</dbReference>
<dbReference type="FunFam" id="3.30.1490.10:FF:000001">
    <property type="entry name" value="30S ribosomal protein S8"/>
    <property type="match status" value="1"/>
</dbReference>
<dbReference type="Gene3D" id="3.30.1370.30">
    <property type="match status" value="1"/>
</dbReference>
<dbReference type="Gene3D" id="3.30.1490.10">
    <property type="match status" value="1"/>
</dbReference>
<dbReference type="HAMAP" id="MF_01302_B">
    <property type="entry name" value="Ribosomal_uS8_B"/>
    <property type="match status" value="1"/>
</dbReference>
<dbReference type="InterPro" id="IPR000630">
    <property type="entry name" value="Ribosomal_uS8"/>
</dbReference>
<dbReference type="InterPro" id="IPR047863">
    <property type="entry name" value="Ribosomal_uS8_CS"/>
</dbReference>
<dbReference type="InterPro" id="IPR035987">
    <property type="entry name" value="Ribosomal_uS8_sf"/>
</dbReference>
<dbReference type="NCBIfam" id="NF001109">
    <property type="entry name" value="PRK00136.1"/>
    <property type="match status" value="1"/>
</dbReference>
<dbReference type="PANTHER" id="PTHR11758">
    <property type="entry name" value="40S RIBOSOMAL PROTEIN S15A"/>
    <property type="match status" value="1"/>
</dbReference>
<dbReference type="Pfam" id="PF00410">
    <property type="entry name" value="Ribosomal_S8"/>
    <property type="match status" value="1"/>
</dbReference>
<dbReference type="SUPFAM" id="SSF56047">
    <property type="entry name" value="Ribosomal protein S8"/>
    <property type="match status" value="1"/>
</dbReference>
<dbReference type="PROSITE" id="PS00053">
    <property type="entry name" value="RIBOSOMAL_S8"/>
    <property type="match status" value="1"/>
</dbReference>
<organism>
    <name type="scientific">Rhizobium etli (strain CIAT 652)</name>
    <dbReference type="NCBI Taxonomy" id="491916"/>
    <lineage>
        <taxon>Bacteria</taxon>
        <taxon>Pseudomonadati</taxon>
        <taxon>Pseudomonadota</taxon>
        <taxon>Alphaproteobacteria</taxon>
        <taxon>Hyphomicrobiales</taxon>
        <taxon>Rhizobiaceae</taxon>
        <taxon>Rhizobium/Agrobacterium group</taxon>
        <taxon>Rhizobium</taxon>
    </lineage>
</organism>
<proteinExistence type="inferred from homology"/>
<comment type="function">
    <text evidence="1">One of the primary rRNA binding proteins, it binds directly to 16S rRNA central domain where it helps coordinate assembly of the platform of the 30S subunit.</text>
</comment>
<comment type="subunit">
    <text evidence="1">Part of the 30S ribosomal subunit. Contacts proteins S5 and S12.</text>
</comment>
<comment type="similarity">
    <text evidence="1">Belongs to the universal ribosomal protein uS8 family.</text>
</comment>
<accession>B3PWT5</accession>
<keyword id="KW-0687">Ribonucleoprotein</keyword>
<keyword id="KW-0689">Ribosomal protein</keyword>
<keyword id="KW-0694">RNA-binding</keyword>
<keyword id="KW-0699">rRNA-binding</keyword>
<sequence>MTMTDPLGDMLTRIRNGASRRKSSVSTPASKLRARVLDVLQSEGYIRGYSVVDFGNGKSELNIELKYYEGASVIREIGRVSKPGRRVYVSVKSIPQVANGLGITILSTPKGVMADHQAREQNVGGEVLCSVF</sequence>
<feature type="chain" id="PRO_1000140600" description="Small ribosomal subunit protein uS8">
    <location>
        <begin position="1"/>
        <end position="132"/>
    </location>
</feature>
<reference key="1">
    <citation type="journal article" date="2010" name="Appl. Environ. Microbiol.">
        <title>Conserved symbiotic plasmid DNA sequences in the multireplicon pangenomic structure of Rhizobium etli.</title>
        <authorList>
            <person name="Gonzalez V."/>
            <person name="Acosta J.L."/>
            <person name="Santamaria R.I."/>
            <person name="Bustos P."/>
            <person name="Fernandez J.L."/>
            <person name="Hernandez Gonzalez I.L."/>
            <person name="Diaz R."/>
            <person name="Flores M."/>
            <person name="Palacios R."/>
            <person name="Mora J."/>
            <person name="Davila G."/>
        </authorList>
    </citation>
    <scope>NUCLEOTIDE SEQUENCE [LARGE SCALE GENOMIC DNA]</scope>
    <source>
        <strain>CIAT 652</strain>
    </source>
</reference>